<organism>
    <name type="scientific">Aspergillus niger</name>
    <dbReference type="NCBI Taxonomy" id="5061"/>
    <lineage>
        <taxon>Eukaryota</taxon>
        <taxon>Fungi</taxon>
        <taxon>Dikarya</taxon>
        <taxon>Ascomycota</taxon>
        <taxon>Pezizomycotina</taxon>
        <taxon>Eurotiomycetes</taxon>
        <taxon>Eurotiomycetidae</taxon>
        <taxon>Eurotiales</taxon>
        <taxon>Aspergillaceae</taxon>
        <taxon>Aspergillus</taxon>
        <taxon>Aspergillus subgen. Circumdati</taxon>
    </lineage>
</organism>
<evidence type="ECO:0000305" key="1"/>
<dbReference type="EC" id="3.4.16.-"/>
<dbReference type="ESTHER" id="aspsa-peps">
    <property type="family name" value="Carboxypeptidase_S10"/>
</dbReference>
<dbReference type="PaxDb" id="5061-CADANGAP00001927"/>
<dbReference type="eggNOG" id="KOG1282">
    <property type="taxonomic scope" value="Eukaryota"/>
</dbReference>
<dbReference type="GO" id="GO:0005576">
    <property type="term" value="C:extracellular region"/>
    <property type="evidence" value="ECO:0007669"/>
    <property type="project" value="UniProtKB-SubCell"/>
</dbReference>
<dbReference type="GO" id="GO:0004180">
    <property type="term" value="F:carboxypeptidase activity"/>
    <property type="evidence" value="ECO:0007669"/>
    <property type="project" value="UniProtKB-KW"/>
</dbReference>
<dbReference type="GO" id="GO:0006508">
    <property type="term" value="P:proteolysis"/>
    <property type="evidence" value="ECO:0007669"/>
    <property type="project" value="UniProtKB-KW"/>
</dbReference>
<protein>
    <recommendedName>
        <fullName>Carboxypeptidase 1</fullName>
        <ecNumber>3.4.16.-</ecNumber>
    </recommendedName>
    <alternativeName>
        <fullName>Carboxypeptidase I</fullName>
        <shortName>CPD-I</shortName>
    </alternativeName>
</protein>
<keyword id="KW-0121">Carboxypeptidase</keyword>
<keyword id="KW-0903">Direct protein sequencing</keyword>
<keyword id="KW-0325">Glycoprotein</keyword>
<keyword id="KW-0378">Hydrolase</keyword>
<keyword id="KW-0645">Protease</keyword>
<keyword id="KW-0964">Secreted</keyword>
<accession>P55749</accession>
<feature type="chain" id="PRO_0000120565" description="Carboxypeptidase 1">
    <location>
        <begin position="1"/>
        <end position="24" status="greater than"/>
    </location>
</feature>
<feature type="glycosylation site" description="N-linked (GlcNAc...) asparagine" evidence="1">
    <location>
        <position position="3"/>
    </location>
</feature>
<feature type="glycosylation site" description="N-linked (GlcNAc...) asparagine" evidence="1">
    <location>
        <position position="11"/>
    </location>
</feature>
<feature type="unsure residue">
    <location>
        <position position="3"/>
    </location>
</feature>
<feature type="unsure residue">
    <location>
        <position position="11"/>
    </location>
</feature>
<feature type="non-terminal residue">
    <location>
        <position position="24"/>
    </location>
</feature>
<proteinExistence type="evidence at protein level"/>
<reference key="1">
    <citation type="journal article" date="1992" name="Appl. Environ. Microbiol.">
        <title>Purification and characterization of two serine carboxypeptidases from Aspergillus niger and their use in C-terminal sequencing of proteins and peptide synthesis.</title>
        <authorList>
            <person name="Dal Degan F."/>
            <person name="Ribadeau-Dumas B."/>
            <person name="Breddam K."/>
        </authorList>
    </citation>
    <scope>PROTEIN SEQUENCE</scope>
    <scope>CHARACTERIZATION</scope>
</reference>
<comment type="function">
    <text>Removes acidic, neutral and basic amino acids as well as proline from the C-terminal position. Digests preferentially peptides containing a hydrophobic residue in P1' position, as well as arginine, lysine or phenylalanine in P1 position of ester substrate. Catalyzes also peptide synthesis.</text>
</comment>
<comment type="activity regulation">
    <text>Inhibited by DFP.</text>
</comment>
<comment type="biophysicochemical properties">
    <phDependence>
        <text>Optimum pH is 4. Unstable above pH 8.</text>
    </phDependence>
</comment>
<comment type="subunit">
    <text>Monomer.</text>
</comment>
<comment type="subcellular location">
    <subcellularLocation>
        <location>Secreted</location>
    </subcellularLocation>
</comment>
<comment type="PTM">
    <text>Contains both N- and O-linked sugar chains. The N-linked oligosaccharides are unique structures of Man(10)GlcNAc(2) and Man(11)GlcNAc(2). Deglycosylation does neither affect catalytic activity, pH, thermal stability, or resistance to proteolysis of the enzyme.</text>
</comment>
<comment type="similarity">
    <text evidence="1">Belongs to the peptidase S10 family.</text>
</comment>
<sequence length="24" mass="2623">LTNKTARFLVNGTSIPEVDFDVGE</sequence>
<name>PEP1_ASPNG</name>